<organism>
    <name type="scientific">Haloferax volcanii (strain ATCC 29605 / DSM 3757 / JCM 8879 / NBRC 14742 / NCIMB 2012 / VKM B-1768 / DS2)</name>
    <name type="common">Halobacterium volcanii</name>
    <dbReference type="NCBI Taxonomy" id="309800"/>
    <lineage>
        <taxon>Archaea</taxon>
        <taxon>Methanobacteriati</taxon>
        <taxon>Methanobacteriota</taxon>
        <taxon>Stenosarchaea group</taxon>
        <taxon>Halobacteria</taxon>
        <taxon>Halobacteriales</taxon>
        <taxon>Haloferacaceae</taxon>
        <taxon>Haloferax</taxon>
    </lineage>
</organism>
<comment type="function">
    <text evidence="2">Involved in DNA damage repair. Works together with the UvrABC proteins in repairing DNA damage resulting from exposure to the DNA damaging agent mitomycin C (MMC).</text>
</comment>
<comment type="subunit">
    <text evidence="5">Interacts with the DNA polymerase sliding clamp (PCNA) via the PIP (PCNA-interacting peptide) motif.</text>
</comment>
<comment type="disruption phenotype">
    <text evidence="2">Non-essential, but cells lacking this gene are sensitive to DNA damage induced by treatment with MMC. Does not display increased sensitivity to UV light or to the alkylating agent methyl methanesulphonate (MMS).</text>
</comment>
<comment type="similarity">
    <text evidence="1 5">Belongs to the Nre family.</text>
</comment>
<sequence>MRLDEYMDIERDERAERRRLAEEKSYGILDHLETFQDRFEETVQGDSLYGGVSPSIFVGRSNYPNVSTGILSPVGHDEDAASFETSAAWYDEGVSIDDVFQRRTSLLNSNRGTKVTNVADSWDGFLGTQREVAIADRPVTVEIGLDGKPSLDLDASADDVATPVGPRARARSADLAENPHVPKLVKKTLEDDDWNAEGAMTYLYRRGFDVYDINTILSAGALGQTEQRRLVPTRWSITAVDDTLGQYLRGQVKHAESVDGVEIYRNEFIGNAFWVILAPGRWEFELIELKAPGSVWNPDPEAGMYLAADREGYEGRTGYVNETAGAYHASRLGVLEHLQERGRQAKALVIRHVSDDYWGPVGVWQIRESIRHAFEGEMADAETFGDAVRDVTEYLPVSLADLRRKSTMAAGLQTDIFDFA</sequence>
<keyword id="KW-0227">DNA damage</keyword>
<keyword id="KW-0234">DNA repair</keyword>
<keyword id="KW-1185">Reference proteome</keyword>
<dbReference type="EMBL" id="CP001956">
    <property type="protein sequence ID" value="ADE03741.1"/>
    <property type="molecule type" value="Genomic_DNA"/>
</dbReference>
<dbReference type="RefSeq" id="WP_004044203.1">
    <property type="nucleotide sequence ID" value="NC_013967.1"/>
</dbReference>
<dbReference type="STRING" id="309800.HVO_0734"/>
<dbReference type="PaxDb" id="309800-C498_15063"/>
<dbReference type="EnsemblBacteria" id="ADE03741">
    <property type="protein sequence ID" value="ADE03741"/>
    <property type="gene ID" value="HVO_0734"/>
</dbReference>
<dbReference type="GeneID" id="8926669"/>
<dbReference type="KEGG" id="hvo:HVO_0734"/>
<dbReference type="PATRIC" id="fig|309800.29.peg.2907"/>
<dbReference type="eggNOG" id="arCOG04269">
    <property type="taxonomic scope" value="Archaea"/>
</dbReference>
<dbReference type="HOGENOM" id="CLU_039703_0_0_2"/>
<dbReference type="OrthoDB" id="6609at2157"/>
<dbReference type="Proteomes" id="UP000008243">
    <property type="component" value="Chromosome"/>
</dbReference>
<dbReference type="GO" id="GO:0006281">
    <property type="term" value="P:DNA repair"/>
    <property type="evidence" value="ECO:0007669"/>
    <property type="project" value="UniProtKB-UniRule"/>
</dbReference>
<dbReference type="HAMAP" id="MF_02096">
    <property type="entry name" value="Nre"/>
    <property type="match status" value="1"/>
</dbReference>
<dbReference type="InterPro" id="IPR033167">
    <property type="entry name" value="Nre"/>
</dbReference>
<dbReference type="InterPro" id="IPR006979">
    <property type="entry name" value="Nre_C"/>
</dbReference>
<dbReference type="InterPro" id="IPR053546">
    <property type="entry name" value="Nre_DNA_repair"/>
</dbReference>
<dbReference type="InterPro" id="IPR006978">
    <property type="entry name" value="Nre_N"/>
</dbReference>
<dbReference type="NCBIfam" id="NF041387">
    <property type="entry name" value="DNArepr_NreA_Halo"/>
    <property type="match status" value="1"/>
</dbReference>
<dbReference type="PANTHER" id="PTHR38136">
    <property type="entry name" value="DNA REPAIR PROTEIN"/>
    <property type="match status" value="1"/>
</dbReference>
<dbReference type="PANTHER" id="PTHR38136:SF2">
    <property type="entry name" value="DNA REPAIR PROTEIN"/>
    <property type="match status" value="1"/>
</dbReference>
<dbReference type="Pfam" id="PF04895">
    <property type="entry name" value="Nre_C"/>
    <property type="match status" value="1"/>
</dbReference>
<dbReference type="Pfam" id="PF04894">
    <property type="entry name" value="Nre_N"/>
    <property type="match status" value="1"/>
</dbReference>
<reference key="1">
    <citation type="journal article" date="2010" name="PLoS ONE">
        <title>The complete genome sequence of Haloferax volcanii DS2, a model archaeon.</title>
        <authorList>
            <person name="Hartman A.L."/>
            <person name="Norais C."/>
            <person name="Badger J.H."/>
            <person name="Delmas S."/>
            <person name="Haldenby S."/>
            <person name="Madupu R."/>
            <person name="Robinson J."/>
            <person name="Khouri H."/>
            <person name="Ren Q."/>
            <person name="Lowe T.M."/>
            <person name="Maupin-Furlow J."/>
            <person name="Pohlschroder M."/>
            <person name="Daniels C."/>
            <person name="Pfeiffer F."/>
            <person name="Allers T."/>
            <person name="Eisen J.A."/>
        </authorList>
    </citation>
    <scope>NUCLEOTIDE SEQUENCE [LARGE SCALE GENOMIC DNA]</scope>
    <source>
        <strain>ATCC 29605 / DSM 3757 / JCM 8879 / NBRC 14742 / NCIMB 2012 / VKM B-1768 / DS2</strain>
    </source>
</reference>
<reference key="2">
    <citation type="journal article" date="2016" name="Mol. Microbiol.">
        <title>A novel archaeal DNA repair factor that acts with the UvrABC system to repair mitomycin C-induced DNA damage in a PCNA-dependent manner.</title>
        <authorList>
            <person name="Giroux X."/>
            <person name="MacNeill S.A."/>
        </authorList>
    </citation>
    <scope>FUNCTION</scope>
    <scope>NOMENCLATURE</scope>
    <scope>DISRUPTION PHENOTYPE</scope>
    <scope>PIP MOTIF</scope>
    <scope>MUTAGENESIS OF 411-GLY--ALA-420</scope>
    <source>
        <strain>DS2 / DS70</strain>
    </source>
</reference>
<evidence type="ECO:0000255" key="1">
    <source>
        <dbReference type="HAMAP-Rule" id="MF_02096"/>
    </source>
</evidence>
<evidence type="ECO:0000269" key="2">
    <source>
    </source>
</evidence>
<evidence type="ECO:0000303" key="3">
    <source>
    </source>
</evidence>
<evidence type="ECO:0000305" key="4"/>
<evidence type="ECO:0000305" key="5">
    <source>
    </source>
</evidence>
<evidence type="ECO:0000312" key="6">
    <source>
        <dbReference type="EMBL" id="ADE03741.1"/>
    </source>
</evidence>
<gene>
    <name evidence="3" type="primary">nreA</name>
    <name evidence="6" type="ordered locus">HVO_0734</name>
</gene>
<feature type="chain" id="PRO_0000442518" description="DNA repair protein NreA">
    <location>
        <begin position="1"/>
        <end position="420"/>
    </location>
</feature>
<feature type="short sequence motif" description="PIP motif" evidence="5">
    <location>
        <begin position="413"/>
        <end position="420"/>
    </location>
</feature>
<feature type="mutagenesis site" description="Displays increased chromosome fragmentation and delayed recovery relative to wild-type cells." evidence="2">
    <location>
        <begin position="411"/>
        <end position="420"/>
    </location>
</feature>
<proteinExistence type="evidence at protein level"/>
<name>NREA_HALVD</name>
<accession>D4GTA5</accession>
<protein>
    <recommendedName>
        <fullName evidence="4">DNA repair protein NreA</fullName>
    </recommendedName>
    <alternativeName>
        <fullName evidence="3">PCNA interacting protein NreA</fullName>
    </alternativeName>
</protein>